<name>CITD_LACH4</name>
<sequence>MEIKTTAVAGTLESSDIQIMISKGSNGIEIDLESEVKKAYGDQIEKVITETLKKYGLENAKVKATDKGALDCVIKARTLAVAQRATETQDKPDLEVL</sequence>
<proteinExistence type="inferred from homology"/>
<accession>A8YUY2</accession>
<organism>
    <name type="scientific">Lactobacillus helveticus (strain DPC 4571)</name>
    <dbReference type="NCBI Taxonomy" id="405566"/>
    <lineage>
        <taxon>Bacteria</taxon>
        <taxon>Bacillati</taxon>
        <taxon>Bacillota</taxon>
        <taxon>Bacilli</taxon>
        <taxon>Lactobacillales</taxon>
        <taxon>Lactobacillaceae</taxon>
        <taxon>Lactobacillus</taxon>
    </lineage>
</organism>
<evidence type="ECO:0000255" key="1">
    <source>
        <dbReference type="HAMAP-Rule" id="MF_00805"/>
    </source>
</evidence>
<protein>
    <recommendedName>
        <fullName evidence="1">Citrate lyase acyl carrier protein</fullName>
    </recommendedName>
    <alternativeName>
        <fullName evidence="1">Citrate lyase gamma chain</fullName>
    </alternativeName>
</protein>
<keyword id="KW-0963">Cytoplasm</keyword>
<keyword id="KW-0597">Phosphoprotein</keyword>
<reference key="1">
    <citation type="journal article" date="2008" name="J. Bacteriol.">
        <title>Genome sequence of Lactobacillus helveticus: an organism distinguished by selective gene loss and IS element expansion.</title>
        <authorList>
            <person name="Callanan M."/>
            <person name="Kaleta P."/>
            <person name="O'Callaghan J."/>
            <person name="O'Sullivan O."/>
            <person name="Jordan K."/>
            <person name="McAuliffe O."/>
            <person name="Sangrador-Vegas A."/>
            <person name="Slattery L."/>
            <person name="Fitzgerald G.F."/>
            <person name="Beresford T."/>
            <person name="Ross R.P."/>
        </authorList>
    </citation>
    <scope>NUCLEOTIDE SEQUENCE [LARGE SCALE GENOMIC DNA]</scope>
    <source>
        <strain>DPC 4571</strain>
    </source>
</reference>
<dbReference type="EMBL" id="CP000517">
    <property type="protein sequence ID" value="ABX27070.1"/>
    <property type="molecule type" value="Genomic_DNA"/>
</dbReference>
<dbReference type="RefSeq" id="WP_003628158.1">
    <property type="nucleotide sequence ID" value="NC_010080.1"/>
</dbReference>
<dbReference type="SMR" id="A8YUY2"/>
<dbReference type="GeneID" id="83726330"/>
<dbReference type="KEGG" id="lhe:lhv_0988"/>
<dbReference type="eggNOG" id="COG3052">
    <property type="taxonomic scope" value="Bacteria"/>
</dbReference>
<dbReference type="HOGENOM" id="CLU_158489_0_0_9"/>
<dbReference type="Proteomes" id="UP000000790">
    <property type="component" value="Chromosome"/>
</dbReference>
<dbReference type="GO" id="GO:0005737">
    <property type="term" value="C:cytoplasm"/>
    <property type="evidence" value="ECO:0007669"/>
    <property type="project" value="UniProtKB-SubCell"/>
</dbReference>
<dbReference type="HAMAP" id="MF_00805">
    <property type="entry name" value="CitD"/>
    <property type="match status" value="1"/>
</dbReference>
<dbReference type="InterPro" id="IPR006495">
    <property type="entry name" value="CitD"/>
</dbReference>
<dbReference type="InterPro" id="IPR023439">
    <property type="entry name" value="Mal_deCO2ase/Cit_lyase_ACP"/>
</dbReference>
<dbReference type="NCBIfam" id="TIGR01608">
    <property type="entry name" value="citD"/>
    <property type="match status" value="1"/>
</dbReference>
<dbReference type="NCBIfam" id="NF009726">
    <property type="entry name" value="PRK13253.1"/>
    <property type="match status" value="1"/>
</dbReference>
<dbReference type="Pfam" id="PF06857">
    <property type="entry name" value="ACP"/>
    <property type="match status" value="1"/>
</dbReference>
<dbReference type="PIRSF" id="PIRSF002736">
    <property type="entry name" value="Citrt_lyas_gamma"/>
    <property type="match status" value="1"/>
</dbReference>
<comment type="function">
    <text evidence="1">Covalent carrier of the coenzyme of citrate lyase.</text>
</comment>
<comment type="subunit">
    <text evidence="1">Oligomer with a subunit composition of (alpha,beta,gamma)6.</text>
</comment>
<comment type="subcellular location">
    <subcellularLocation>
        <location evidence="1">Cytoplasm</location>
    </subcellularLocation>
</comment>
<comment type="similarity">
    <text evidence="1">Belongs to the CitD family.</text>
</comment>
<feature type="chain" id="PRO_1000072850" description="Citrate lyase acyl carrier protein">
    <location>
        <begin position="1"/>
        <end position="97"/>
    </location>
</feature>
<feature type="modified residue" description="O-(phosphoribosyl dephospho-coenzyme A)serine" evidence="1">
    <location>
        <position position="14"/>
    </location>
</feature>
<gene>
    <name evidence="1" type="primary">citD</name>
    <name type="ordered locus">lhv_0988</name>
</gene>